<organism>
    <name type="scientific">Mus musculus</name>
    <name type="common">Mouse</name>
    <dbReference type="NCBI Taxonomy" id="10090"/>
    <lineage>
        <taxon>Eukaryota</taxon>
        <taxon>Metazoa</taxon>
        <taxon>Chordata</taxon>
        <taxon>Craniata</taxon>
        <taxon>Vertebrata</taxon>
        <taxon>Euteleostomi</taxon>
        <taxon>Mammalia</taxon>
        <taxon>Eutheria</taxon>
        <taxon>Euarchontoglires</taxon>
        <taxon>Glires</taxon>
        <taxon>Rodentia</taxon>
        <taxon>Myomorpha</taxon>
        <taxon>Muroidea</taxon>
        <taxon>Muridae</taxon>
        <taxon>Murinae</taxon>
        <taxon>Mus</taxon>
        <taxon>Mus</taxon>
    </lineage>
</organism>
<name>SPR1A_MOUSE</name>
<dbReference type="EMBL" id="X91824">
    <property type="protein sequence ID" value="CAA62933.1"/>
    <property type="molecule type" value="mRNA"/>
</dbReference>
<dbReference type="EMBL" id="AF057156">
    <property type="protein sequence ID" value="AAD10126.1"/>
    <property type="molecule type" value="Genomic_DNA"/>
</dbReference>
<dbReference type="EMBL" id="AK144782">
    <property type="protein sequence ID" value="BAE26064.1"/>
    <property type="molecule type" value="mRNA"/>
</dbReference>
<dbReference type="EMBL" id="CH466656">
    <property type="protein sequence ID" value="EDL00695.1"/>
    <property type="molecule type" value="Genomic_DNA"/>
</dbReference>
<dbReference type="EMBL" id="BC027534">
    <property type="protein sequence ID" value="AAH27534.1"/>
    <property type="molecule type" value="mRNA"/>
</dbReference>
<dbReference type="CCDS" id="CCDS17559.1"/>
<dbReference type="RefSeq" id="NP_033290.1">
    <property type="nucleotide sequence ID" value="NM_009264.2"/>
</dbReference>
<dbReference type="FunCoup" id="Q62266">
    <property type="interactions" value="2"/>
</dbReference>
<dbReference type="STRING" id="10090.ENSMUSP00000053751"/>
<dbReference type="GlyGen" id="Q62266">
    <property type="glycosylation" value="2 sites, 1 O-linked glycan (1 site)"/>
</dbReference>
<dbReference type="iPTMnet" id="Q62266"/>
<dbReference type="PhosphoSitePlus" id="Q62266"/>
<dbReference type="PaxDb" id="10090-ENSMUSP00000053751"/>
<dbReference type="PeptideAtlas" id="Q62266"/>
<dbReference type="ProteomicsDB" id="261626"/>
<dbReference type="DNASU" id="20753"/>
<dbReference type="Ensembl" id="ENSMUST00000054599.8">
    <property type="protein sequence ID" value="ENSMUSP00000053751.8"/>
    <property type="gene ID" value="ENSMUSG00000050359.8"/>
</dbReference>
<dbReference type="GeneID" id="20753"/>
<dbReference type="KEGG" id="mmu:20753"/>
<dbReference type="UCSC" id="uc008qed.1">
    <property type="organism name" value="mouse"/>
</dbReference>
<dbReference type="AGR" id="MGI:106660"/>
<dbReference type="CTD" id="6698"/>
<dbReference type="MGI" id="MGI:106660">
    <property type="gene designation" value="Sprr1a"/>
</dbReference>
<dbReference type="VEuPathDB" id="HostDB:ENSMUSG00000050359"/>
<dbReference type="eggNOG" id="ENOG502SCIR">
    <property type="taxonomic scope" value="Eukaryota"/>
</dbReference>
<dbReference type="GeneTree" id="ENSGT00940000163019"/>
<dbReference type="HOGENOM" id="CLU_101829_1_0_1"/>
<dbReference type="InParanoid" id="Q62266"/>
<dbReference type="OMA" id="PPAQEKC"/>
<dbReference type="OrthoDB" id="9837279at2759"/>
<dbReference type="PhylomeDB" id="Q62266"/>
<dbReference type="TreeFam" id="TF338205"/>
<dbReference type="BioGRID-ORCS" id="20753">
    <property type="hits" value="1 hit in 76 CRISPR screens"/>
</dbReference>
<dbReference type="ChiTaRS" id="Sprr1a">
    <property type="organism name" value="mouse"/>
</dbReference>
<dbReference type="PRO" id="PR:Q62266"/>
<dbReference type="Proteomes" id="UP000000589">
    <property type="component" value="Chromosome 3"/>
</dbReference>
<dbReference type="RNAct" id="Q62266">
    <property type="molecule type" value="protein"/>
</dbReference>
<dbReference type="Bgee" id="ENSMUSG00000050359">
    <property type="expression patterns" value="Expressed in urinary bladder urothelium and 118 other cell types or tissues"/>
</dbReference>
<dbReference type="GO" id="GO:0071944">
    <property type="term" value="C:cell periphery"/>
    <property type="evidence" value="ECO:0000314"/>
    <property type="project" value="MGI"/>
</dbReference>
<dbReference type="GO" id="GO:0005737">
    <property type="term" value="C:cytoplasm"/>
    <property type="evidence" value="ECO:0007669"/>
    <property type="project" value="UniProtKB-SubCell"/>
</dbReference>
<dbReference type="GO" id="GO:0031424">
    <property type="term" value="P:keratinization"/>
    <property type="evidence" value="ECO:0007669"/>
    <property type="project" value="UniProtKB-KW"/>
</dbReference>
<dbReference type="Pfam" id="PF02389">
    <property type="entry name" value="Cornifin"/>
    <property type="match status" value="1"/>
</dbReference>
<dbReference type="PRINTS" id="PR00021">
    <property type="entry name" value="PRORICH"/>
</dbReference>
<gene>
    <name type="primary">Sprr1a</name>
</gene>
<protein>
    <recommendedName>
        <fullName>Cornifin-A</fullName>
    </recommendedName>
    <alternativeName>
        <fullName>Small proline-rich protein 1A</fullName>
        <shortName>SPR1 A</shortName>
        <shortName>SPR1A</shortName>
    </alternativeName>
</protein>
<evidence type="ECO:0000256" key="1">
    <source>
        <dbReference type="SAM" id="MobiDB-lite"/>
    </source>
</evidence>
<evidence type="ECO:0000269" key="2">
    <source>
    </source>
</evidence>
<evidence type="ECO:0000305" key="3"/>
<feature type="chain" id="PRO_0000149998" description="Cornifin-A">
    <location>
        <begin position="1"/>
        <end position="144"/>
    </location>
</feature>
<feature type="repeat" description="1">
    <location>
        <begin position="27"/>
        <end position="34"/>
    </location>
</feature>
<feature type="repeat" description="2">
    <location>
        <begin position="35"/>
        <end position="42"/>
    </location>
</feature>
<feature type="repeat" description="3">
    <location>
        <begin position="43"/>
        <end position="49"/>
    </location>
</feature>
<feature type="repeat" description="4">
    <location>
        <begin position="50"/>
        <end position="57"/>
    </location>
</feature>
<feature type="repeat" description="5">
    <location>
        <begin position="58"/>
        <end position="65"/>
    </location>
</feature>
<feature type="repeat" description="6">
    <location>
        <begin position="66"/>
        <end position="73"/>
    </location>
</feature>
<feature type="repeat" description="7">
    <location>
        <begin position="74"/>
        <end position="81"/>
    </location>
</feature>
<feature type="repeat" description="8">
    <location>
        <begin position="82"/>
        <end position="89"/>
    </location>
</feature>
<feature type="repeat" description="9">
    <location>
        <begin position="90"/>
        <end position="97"/>
    </location>
</feature>
<feature type="repeat" description="10">
    <location>
        <begin position="98"/>
        <end position="105"/>
    </location>
</feature>
<feature type="repeat" description="11">
    <location>
        <begin position="106"/>
        <end position="113"/>
    </location>
</feature>
<feature type="repeat" description="12">
    <location>
        <begin position="114"/>
        <end position="121"/>
    </location>
</feature>
<feature type="repeat" description="13">
    <location>
        <begin position="122"/>
        <end position="129"/>
    </location>
</feature>
<feature type="region of interest" description="Disordered" evidence="1">
    <location>
        <begin position="1"/>
        <end position="41"/>
    </location>
</feature>
<feature type="region of interest" description="13 X 8 AA approximate tandem repeats">
    <location>
        <begin position="27"/>
        <end position="129"/>
    </location>
</feature>
<feature type="compositionally biased region" description="Low complexity" evidence="1">
    <location>
        <begin position="13"/>
        <end position="24"/>
    </location>
</feature>
<accession>Q62266</accession>
<accession>Q3UMN4</accession>
<proteinExistence type="evidence at protein level"/>
<reference key="1">
    <citation type="journal article" date="1996" name="J. Invest. Dermatol.">
        <title>Sequence and expression patterns of mouse SPR1: correlation of expression with epithelial function.</title>
        <authorList>
            <person name="Kartasova T."/>
            <person name="Darwiche N."/>
            <person name="Kohno Y."/>
            <person name="Koizumi H."/>
            <person name="Osada S."/>
            <person name="Huh N.-H."/>
            <person name="Lichti U."/>
            <person name="Steinert P.M."/>
            <person name="Kuroki T."/>
        </authorList>
    </citation>
    <scope>NUCLEOTIDE SEQUENCE [MRNA]</scope>
    <scope>TISSUE SPECIFICITY</scope>
    <scope>DEVELOPMENTAL STAGE</scope>
    <source>
        <strain>CD-1</strain>
    </source>
</reference>
<reference key="2">
    <citation type="journal article" date="1998" name="Gene">
        <title>Structure and organization of the genes encoding mouse small proline-rich proteins, mSPRR1A and 1B.</title>
        <authorList>
            <person name="Reddy S.P."/>
            <person name="Konkin T."/>
            <person name="Wu R."/>
        </authorList>
    </citation>
    <scope>NUCLEOTIDE SEQUENCE [GENOMIC DNA]</scope>
    <source>
        <strain>129/SvJ</strain>
    </source>
</reference>
<reference key="3">
    <citation type="journal article" date="2005" name="Science">
        <title>The transcriptional landscape of the mammalian genome.</title>
        <authorList>
            <person name="Carninci P."/>
            <person name="Kasukawa T."/>
            <person name="Katayama S."/>
            <person name="Gough J."/>
            <person name="Frith M.C."/>
            <person name="Maeda N."/>
            <person name="Oyama R."/>
            <person name="Ravasi T."/>
            <person name="Lenhard B."/>
            <person name="Wells C."/>
            <person name="Kodzius R."/>
            <person name="Shimokawa K."/>
            <person name="Bajic V.B."/>
            <person name="Brenner S.E."/>
            <person name="Batalov S."/>
            <person name="Forrest A.R."/>
            <person name="Zavolan M."/>
            <person name="Davis M.J."/>
            <person name="Wilming L.G."/>
            <person name="Aidinis V."/>
            <person name="Allen J.E."/>
            <person name="Ambesi-Impiombato A."/>
            <person name="Apweiler R."/>
            <person name="Aturaliya R.N."/>
            <person name="Bailey T.L."/>
            <person name="Bansal M."/>
            <person name="Baxter L."/>
            <person name="Beisel K.W."/>
            <person name="Bersano T."/>
            <person name="Bono H."/>
            <person name="Chalk A.M."/>
            <person name="Chiu K.P."/>
            <person name="Choudhary V."/>
            <person name="Christoffels A."/>
            <person name="Clutterbuck D.R."/>
            <person name="Crowe M.L."/>
            <person name="Dalla E."/>
            <person name="Dalrymple B.P."/>
            <person name="de Bono B."/>
            <person name="Della Gatta G."/>
            <person name="di Bernardo D."/>
            <person name="Down T."/>
            <person name="Engstrom P."/>
            <person name="Fagiolini M."/>
            <person name="Faulkner G."/>
            <person name="Fletcher C.F."/>
            <person name="Fukushima T."/>
            <person name="Furuno M."/>
            <person name="Futaki S."/>
            <person name="Gariboldi M."/>
            <person name="Georgii-Hemming P."/>
            <person name="Gingeras T.R."/>
            <person name="Gojobori T."/>
            <person name="Green R.E."/>
            <person name="Gustincich S."/>
            <person name="Harbers M."/>
            <person name="Hayashi Y."/>
            <person name="Hensch T.K."/>
            <person name="Hirokawa N."/>
            <person name="Hill D."/>
            <person name="Huminiecki L."/>
            <person name="Iacono M."/>
            <person name="Ikeo K."/>
            <person name="Iwama A."/>
            <person name="Ishikawa T."/>
            <person name="Jakt M."/>
            <person name="Kanapin A."/>
            <person name="Katoh M."/>
            <person name="Kawasawa Y."/>
            <person name="Kelso J."/>
            <person name="Kitamura H."/>
            <person name="Kitano H."/>
            <person name="Kollias G."/>
            <person name="Krishnan S.P."/>
            <person name="Kruger A."/>
            <person name="Kummerfeld S.K."/>
            <person name="Kurochkin I.V."/>
            <person name="Lareau L.F."/>
            <person name="Lazarevic D."/>
            <person name="Lipovich L."/>
            <person name="Liu J."/>
            <person name="Liuni S."/>
            <person name="McWilliam S."/>
            <person name="Madan Babu M."/>
            <person name="Madera M."/>
            <person name="Marchionni L."/>
            <person name="Matsuda H."/>
            <person name="Matsuzawa S."/>
            <person name="Miki H."/>
            <person name="Mignone F."/>
            <person name="Miyake S."/>
            <person name="Morris K."/>
            <person name="Mottagui-Tabar S."/>
            <person name="Mulder N."/>
            <person name="Nakano N."/>
            <person name="Nakauchi H."/>
            <person name="Ng P."/>
            <person name="Nilsson R."/>
            <person name="Nishiguchi S."/>
            <person name="Nishikawa S."/>
            <person name="Nori F."/>
            <person name="Ohara O."/>
            <person name="Okazaki Y."/>
            <person name="Orlando V."/>
            <person name="Pang K.C."/>
            <person name="Pavan W.J."/>
            <person name="Pavesi G."/>
            <person name="Pesole G."/>
            <person name="Petrovsky N."/>
            <person name="Piazza S."/>
            <person name="Reed J."/>
            <person name="Reid J.F."/>
            <person name="Ring B.Z."/>
            <person name="Ringwald M."/>
            <person name="Rost B."/>
            <person name="Ruan Y."/>
            <person name="Salzberg S.L."/>
            <person name="Sandelin A."/>
            <person name="Schneider C."/>
            <person name="Schoenbach C."/>
            <person name="Sekiguchi K."/>
            <person name="Semple C.A."/>
            <person name="Seno S."/>
            <person name="Sessa L."/>
            <person name="Sheng Y."/>
            <person name="Shibata Y."/>
            <person name="Shimada H."/>
            <person name="Shimada K."/>
            <person name="Silva D."/>
            <person name="Sinclair B."/>
            <person name="Sperling S."/>
            <person name="Stupka E."/>
            <person name="Sugiura K."/>
            <person name="Sultana R."/>
            <person name="Takenaka Y."/>
            <person name="Taki K."/>
            <person name="Tammoja K."/>
            <person name="Tan S.L."/>
            <person name="Tang S."/>
            <person name="Taylor M.S."/>
            <person name="Tegner J."/>
            <person name="Teichmann S.A."/>
            <person name="Ueda H.R."/>
            <person name="van Nimwegen E."/>
            <person name="Verardo R."/>
            <person name="Wei C.L."/>
            <person name="Yagi K."/>
            <person name="Yamanishi H."/>
            <person name="Zabarovsky E."/>
            <person name="Zhu S."/>
            <person name="Zimmer A."/>
            <person name="Hide W."/>
            <person name="Bult C."/>
            <person name="Grimmond S.M."/>
            <person name="Teasdale R.D."/>
            <person name="Liu E.T."/>
            <person name="Brusic V."/>
            <person name="Quackenbush J."/>
            <person name="Wahlestedt C."/>
            <person name="Mattick J.S."/>
            <person name="Hume D.A."/>
            <person name="Kai C."/>
            <person name="Sasaki D."/>
            <person name="Tomaru Y."/>
            <person name="Fukuda S."/>
            <person name="Kanamori-Katayama M."/>
            <person name="Suzuki M."/>
            <person name="Aoki J."/>
            <person name="Arakawa T."/>
            <person name="Iida J."/>
            <person name="Imamura K."/>
            <person name="Itoh M."/>
            <person name="Kato T."/>
            <person name="Kawaji H."/>
            <person name="Kawagashira N."/>
            <person name="Kawashima T."/>
            <person name="Kojima M."/>
            <person name="Kondo S."/>
            <person name="Konno H."/>
            <person name="Nakano K."/>
            <person name="Ninomiya N."/>
            <person name="Nishio T."/>
            <person name="Okada M."/>
            <person name="Plessy C."/>
            <person name="Shibata K."/>
            <person name="Shiraki T."/>
            <person name="Suzuki S."/>
            <person name="Tagami M."/>
            <person name="Waki K."/>
            <person name="Watahiki A."/>
            <person name="Okamura-Oho Y."/>
            <person name="Suzuki H."/>
            <person name="Kawai J."/>
            <person name="Hayashizaki Y."/>
        </authorList>
    </citation>
    <scope>NUCLEOTIDE SEQUENCE [LARGE SCALE MRNA]</scope>
    <source>
        <tissue>Lung</tissue>
    </source>
</reference>
<reference key="4">
    <citation type="submission" date="2005-07" db="EMBL/GenBank/DDBJ databases">
        <authorList>
            <person name="Mural R.J."/>
            <person name="Adams M.D."/>
            <person name="Myers E.W."/>
            <person name="Smith H.O."/>
            <person name="Venter J.C."/>
        </authorList>
    </citation>
    <scope>NUCLEOTIDE SEQUENCE [LARGE SCALE GENOMIC DNA]</scope>
</reference>
<reference key="5">
    <citation type="journal article" date="2004" name="Genome Res.">
        <title>The status, quality, and expansion of the NIH full-length cDNA project: the Mammalian Gene Collection (MGC).</title>
        <authorList>
            <consortium name="The MGC Project Team"/>
        </authorList>
    </citation>
    <scope>NUCLEOTIDE SEQUENCE [LARGE SCALE MRNA]</scope>
    <source>
        <strain>C57BL/6J</strain>
        <tissue>Thymus</tissue>
    </source>
</reference>
<reference key="6">
    <citation type="journal article" date="2010" name="Cell">
        <title>A tissue-specific atlas of mouse protein phosphorylation and expression.</title>
        <authorList>
            <person name="Huttlin E.L."/>
            <person name="Jedrychowski M.P."/>
            <person name="Elias J.E."/>
            <person name="Goswami T."/>
            <person name="Rad R."/>
            <person name="Beausoleil S.A."/>
            <person name="Villen J."/>
            <person name="Haas W."/>
            <person name="Sowa M.E."/>
            <person name="Gygi S.P."/>
        </authorList>
    </citation>
    <scope>IDENTIFICATION BY MASS SPECTROMETRY [LARGE SCALE ANALYSIS]</scope>
    <source>
        <tissue>Kidney</tissue>
    </source>
</reference>
<keyword id="KW-0963">Cytoplasm</keyword>
<keyword id="KW-0417">Keratinization</keyword>
<keyword id="KW-1185">Reference proteome</keyword>
<keyword id="KW-0677">Repeat</keyword>
<sequence>MSSHQQKQPCTVPPQLHQQQVKQPCQPPPQEPCAPKTKDPCHPVPEPCNPKGPEPCHPKAPEPCHPKAPEPCNPKVPEPCQPKVPEPCQPKVPEPCNPKVPEPCQPKAPEPCHPKAPEPCHPVVPEPCPSTVTPSPYQQKTKQK</sequence>
<comment type="function">
    <text>Cross-linked envelope protein of keratinocytes. It is a keratinocyte protein that first appears in the cell cytosol, but ultimately becomes cross-linked to membrane proteins by transglutaminase. All that results in the formation of an insoluble envelope beneath the plasma membrane. May participate widely in the construction of cell envelopes in cornifying epithelia characterized by either increased thickness or a requirement for extreme flexibility.</text>
</comment>
<comment type="subcellular location">
    <subcellularLocation>
        <location>Cytoplasm</location>
    </subcellularLocation>
</comment>
<comment type="tissue specificity">
    <text evidence="2">Expressed in fetal periderm, hair follicles and in the thickened epidermis of the lip and footpad. Also present in the epithelia of various tissues such as the penis, vagina, forestomach, tongue and esophagus.</text>
</comment>
<comment type="developmental stage">
    <text evidence="2">First detected in fetal skin around day 16 and expression continues throughout newborn and adult stages.</text>
</comment>
<comment type="similarity">
    <text evidence="3">Belongs to the cornifin (SPRR) family.</text>
</comment>